<protein>
    <recommendedName>
        <fullName evidence="1">Uracil phosphoribosyltransferase</fullName>
        <ecNumber evidence="1">2.4.2.9</ecNumber>
    </recommendedName>
    <alternativeName>
        <fullName evidence="1">UMP pyrophosphorylase</fullName>
    </alternativeName>
    <alternativeName>
        <fullName evidence="1">UPRTase</fullName>
    </alternativeName>
</protein>
<accession>Q8Y4B3</accession>
<sequence>MANVHVINHPLVQHKLTIIRDKNTGTKAFRELVDEVATLMAYEITRDMELEDIQVETPLQTTTAKTLTGKKLGIVPILRAGLGMQDGILKLIPAAKVGHVGLYRDHDTLEPVEYFVKLPSDVEERLFIVVDPMLATGGSAIMAIDCLKKRGARNMKFMCLVAAPEGVKALQDAHPDVEIYVAGLDEKLDENGYIRPGLGDAGDRLFGTK</sequence>
<dbReference type="EC" id="2.4.2.9" evidence="1"/>
<dbReference type="EMBL" id="AL591983">
    <property type="protein sequence ID" value="CAD00616.1"/>
    <property type="molecule type" value="Genomic_DNA"/>
</dbReference>
<dbReference type="PIR" id="AB1392">
    <property type="entry name" value="AB1392"/>
</dbReference>
<dbReference type="RefSeq" id="NP_466061.1">
    <property type="nucleotide sequence ID" value="NC_003210.1"/>
</dbReference>
<dbReference type="RefSeq" id="WP_003723470.1">
    <property type="nucleotide sequence ID" value="NZ_CP149495.1"/>
</dbReference>
<dbReference type="SMR" id="Q8Y4B3"/>
<dbReference type="STRING" id="169963.gene:17595249"/>
<dbReference type="PaxDb" id="169963-lmo2538"/>
<dbReference type="EnsemblBacteria" id="CAD00616">
    <property type="protein sequence ID" value="CAD00616"/>
    <property type="gene ID" value="CAD00616"/>
</dbReference>
<dbReference type="GeneID" id="61190406"/>
<dbReference type="GeneID" id="986484"/>
<dbReference type="KEGG" id="lmo:lmo2538"/>
<dbReference type="PATRIC" id="fig|169963.11.peg.2599"/>
<dbReference type="eggNOG" id="COG0035">
    <property type="taxonomic scope" value="Bacteria"/>
</dbReference>
<dbReference type="HOGENOM" id="CLU_067096_2_2_9"/>
<dbReference type="OrthoDB" id="9781675at2"/>
<dbReference type="PhylomeDB" id="Q8Y4B3"/>
<dbReference type="BioCyc" id="LMON169963:LMO2538-MONOMER"/>
<dbReference type="UniPathway" id="UPA00574">
    <property type="reaction ID" value="UER00636"/>
</dbReference>
<dbReference type="Proteomes" id="UP000000817">
    <property type="component" value="Chromosome"/>
</dbReference>
<dbReference type="GO" id="GO:0005737">
    <property type="term" value="C:cytoplasm"/>
    <property type="evidence" value="ECO:0000318"/>
    <property type="project" value="GO_Central"/>
</dbReference>
<dbReference type="GO" id="GO:0005525">
    <property type="term" value="F:GTP binding"/>
    <property type="evidence" value="ECO:0007669"/>
    <property type="project" value="UniProtKB-KW"/>
</dbReference>
<dbReference type="GO" id="GO:0000287">
    <property type="term" value="F:magnesium ion binding"/>
    <property type="evidence" value="ECO:0007669"/>
    <property type="project" value="UniProtKB-UniRule"/>
</dbReference>
<dbReference type="GO" id="GO:0004845">
    <property type="term" value="F:uracil phosphoribosyltransferase activity"/>
    <property type="evidence" value="ECO:0000318"/>
    <property type="project" value="GO_Central"/>
</dbReference>
<dbReference type="GO" id="GO:0044206">
    <property type="term" value="P:UMP salvage"/>
    <property type="evidence" value="ECO:0007669"/>
    <property type="project" value="UniProtKB-UniRule"/>
</dbReference>
<dbReference type="GO" id="GO:0006223">
    <property type="term" value="P:uracil salvage"/>
    <property type="evidence" value="ECO:0007669"/>
    <property type="project" value="InterPro"/>
</dbReference>
<dbReference type="CDD" id="cd06223">
    <property type="entry name" value="PRTases_typeI"/>
    <property type="match status" value="1"/>
</dbReference>
<dbReference type="FunFam" id="3.40.50.2020:FF:000003">
    <property type="entry name" value="Uracil phosphoribosyltransferase"/>
    <property type="match status" value="1"/>
</dbReference>
<dbReference type="Gene3D" id="3.40.50.2020">
    <property type="match status" value="1"/>
</dbReference>
<dbReference type="HAMAP" id="MF_01218_B">
    <property type="entry name" value="Upp_B"/>
    <property type="match status" value="1"/>
</dbReference>
<dbReference type="InterPro" id="IPR000836">
    <property type="entry name" value="PRibTrfase_dom"/>
</dbReference>
<dbReference type="InterPro" id="IPR029057">
    <property type="entry name" value="PRTase-like"/>
</dbReference>
<dbReference type="InterPro" id="IPR034332">
    <property type="entry name" value="Upp_B"/>
</dbReference>
<dbReference type="InterPro" id="IPR050054">
    <property type="entry name" value="UPRTase/APRTase"/>
</dbReference>
<dbReference type="InterPro" id="IPR005765">
    <property type="entry name" value="Ura_phspho_trans"/>
</dbReference>
<dbReference type="NCBIfam" id="NF001097">
    <property type="entry name" value="PRK00129.1"/>
    <property type="match status" value="1"/>
</dbReference>
<dbReference type="NCBIfam" id="TIGR01091">
    <property type="entry name" value="upp"/>
    <property type="match status" value="1"/>
</dbReference>
<dbReference type="PANTHER" id="PTHR32315">
    <property type="entry name" value="ADENINE PHOSPHORIBOSYLTRANSFERASE"/>
    <property type="match status" value="1"/>
</dbReference>
<dbReference type="PANTHER" id="PTHR32315:SF4">
    <property type="entry name" value="URACIL PHOSPHORIBOSYLTRANSFERASE, CHLOROPLASTIC"/>
    <property type="match status" value="1"/>
</dbReference>
<dbReference type="Pfam" id="PF14681">
    <property type="entry name" value="UPRTase"/>
    <property type="match status" value="1"/>
</dbReference>
<dbReference type="SUPFAM" id="SSF53271">
    <property type="entry name" value="PRTase-like"/>
    <property type="match status" value="1"/>
</dbReference>
<gene>
    <name evidence="1" type="primary">upp</name>
    <name type="ordered locus">lmo2538</name>
</gene>
<organism>
    <name type="scientific">Listeria monocytogenes serovar 1/2a (strain ATCC BAA-679 / EGD-e)</name>
    <dbReference type="NCBI Taxonomy" id="169963"/>
    <lineage>
        <taxon>Bacteria</taxon>
        <taxon>Bacillati</taxon>
        <taxon>Bacillota</taxon>
        <taxon>Bacilli</taxon>
        <taxon>Bacillales</taxon>
        <taxon>Listeriaceae</taxon>
        <taxon>Listeria</taxon>
    </lineage>
</organism>
<comment type="function">
    <text evidence="1">Catalyzes the conversion of uracil and 5-phospho-alpha-D-ribose 1-diphosphate (PRPP) to UMP and diphosphate.</text>
</comment>
<comment type="catalytic activity">
    <reaction evidence="1">
        <text>UMP + diphosphate = 5-phospho-alpha-D-ribose 1-diphosphate + uracil</text>
        <dbReference type="Rhea" id="RHEA:13017"/>
        <dbReference type="ChEBI" id="CHEBI:17568"/>
        <dbReference type="ChEBI" id="CHEBI:33019"/>
        <dbReference type="ChEBI" id="CHEBI:57865"/>
        <dbReference type="ChEBI" id="CHEBI:58017"/>
        <dbReference type="EC" id="2.4.2.9"/>
    </reaction>
</comment>
<comment type="cofactor">
    <cofactor evidence="1">
        <name>Mg(2+)</name>
        <dbReference type="ChEBI" id="CHEBI:18420"/>
    </cofactor>
    <text evidence="1">Binds 1 Mg(2+) ion per subunit. The magnesium is bound as Mg-PRPP.</text>
</comment>
<comment type="activity regulation">
    <text evidence="1">Allosterically activated by GTP.</text>
</comment>
<comment type="pathway">
    <text evidence="1">Pyrimidine metabolism; UMP biosynthesis via salvage pathway; UMP from uracil: step 1/1.</text>
</comment>
<comment type="similarity">
    <text evidence="1">Belongs to the UPRTase family.</text>
</comment>
<proteinExistence type="inferred from homology"/>
<evidence type="ECO:0000255" key="1">
    <source>
        <dbReference type="HAMAP-Rule" id="MF_01218"/>
    </source>
</evidence>
<name>UPP_LISMO</name>
<keyword id="KW-0021">Allosteric enzyme</keyword>
<keyword id="KW-0328">Glycosyltransferase</keyword>
<keyword id="KW-0342">GTP-binding</keyword>
<keyword id="KW-0460">Magnesium</keyword>
<keyword id="KW-0547">Nucleotide-binding</keyword>
<keyword id="KW-1185">Reference proteome</keyword>
<keyword id="KW-0808">Transferase</keyword>
<reference key="1">
    <citation type="journal article" date="2001" name="Science">
        <title>Comparative genomics of Listeria species.</title>
        <authorList>
            <person name="Glaser P."/>
            <person name="Frangeul L."/>
            <person name="Buchrieser C."/>
            <person name="Rusniok C."/>
            <person name="Amend A."/>
            <person name="Baquero F."/>
            <person name="Berche P."/>
            <person name="Bloecker H."/>
            <person name="Brandt P."/>
            <person name="Chakraborty T."/>
            <person name="Charbit A."/>
            <person name="Chetouani F."/>
            <person name="Couve E."/>
            <person name="de Daruvar A."/>
            <person name="Dehoux P."/>
            <person name="Domann E."/>
            <person name="Dominguez-Bernal G."/>
            <person name="Duchaud E."/>
            <person name="Durant L."/>
            <person name="Dussurget O."/>
            <person name="Entian K.-D."/>
            <person name="Fsihi H."/>
            <person name="Garcia-del Portillo F."/>
            <person name="Garrido P."/>
            <person name="Gautier L."/>
            <person name="Goebel W."/>
            <person name="Gomez-Lopez N."/>
            <person name="Hain T."/>
            <person name="Hauf J."/>
            <person name="Jackson D."/>
            <person name="Jones L.-M."/>
            <person name="Kaerst U."/>
            <person name="Kreft J."/>
            <person name="Kuhn M."/>
            <person name="Kunst F."/>
            <person name="Kurapkat G."/>
            <person name="Madueno E."/>
            <person name="Maitournam A."/>
            <person name="Mata Vicente J."/>
            <person name="Ng E."/>
            <person name="Nedjari H."/>
            <person name="Nordsiek G."/>
            <person name="Novella S."/>
            <person name="de Pablos B."/>
            <person name="Perez-Diaz J.-C."/>
            <person name="Purcell R."/>
            <person name="Remmel B."/>
            <person name="Rose M."/>
            <person name="Schlueter T."/>
            <person name="Simoes N."/>
            <person name="Tierrez A."/>
            <person name="Vazquez-Boland J.-A."/>
            <person name="Voss H."/>
            <person name="Wehland J."/>
            <person name="Cossart P."/>
        </authorList>
    </citation>
    <scope>NUCLEOTIDE SEQUENCE [LARGE SCALE GENOMIC DNA]</scope>
    <source>
        <strain>ATCC BAA-679 / EGD-e</strain>
    </source>
</reference>
<feature type="chain" id="PRO_0000120846" description="Uracil phosphoribosyltransferase">
    <location>
        <begin position="1"/>
        <end position="209"/>
    </location>
</feature>
<feature type="binding site" evidence="1">
    <location>
        <position position="79"/>
    </location>
    <ligand>
        <name>5-phospho-alpha-D-ribose 1-diphosphate</name>
        <dbReference type="ChEBI" id="CHEBI:58017"/>
    </ligand>
</feature>
<feature type="binding site" evidence="1">
    <location>
        <position position="104"/>
    </location>
    <ligand>
        <name>5-phospho-alpha-D-ribose 1-diphosphate</name>
        <dbReference type="ChEBI" id="CHEBI:58017"/>
    </ligand>
</feature>
<feature type="binding site" evidence="1">
    <location>
        <begin position="131"/>
        <end position="139"/>
    </location>
    <ligand>
        <name>5-phospho-alpha-D-ribose 1-diphosphate</name>
        <dbReference type="ChEBI" id="CHEBI:58017"/>
    </ligand>
</feature>
<feature type="binding site" evidence="1">
    <location>
        <position position="194"/>
    </location>
    <ligand>
        <name>uracil</name>
        <dbReference type="ChEBI" id="CHEBI:17568"/>
    </ligand>
</feature>
<feature type="binding site" evidence="1">
    <location>
        <begin position="199"/>
        <end position="201"/>
    </location>
    <ligand>
        <name>uracil</name>
        <dbReference type="ChEBI" id="CHEBI:17568"/>
    </ligand>
</feature>
<feature type="binding site" evidence="1">
    <location>
        <position position="200"/>
    </location>
    <ligand>
        <name>5-phospho-alpha-D-ribose 1-diphosphate</name>
        <dbReference type="ChEBI" id="CHEBI:58017"/>
    </ligand>
</feature>